<feature type="chain" id="PRO_0000079103" description="Nucleoprotein">
    <location>
        <begin position="1"/>
        <end position="498"/>
    </location>
</feature>
<feature type="region of interest" description="Disordered" evidence="2">
    <location>
        <begin position="1"/>
        <end position="21"/>
    </location>
</feature>
<feature type="short sequence motif" description="Unconventional nuclear localization signal" evidence="1">
    <location>
        <begin position="1"/>
        <end position="18"/>
    </location>
</feature>
<feature type="short sequence motif" description="Bipartite nuclear localization signal" evidence="1">
    <location>
        <begin position="198"/>
        <end position="216"/>
    </location>
</feature>
<comment type="function">
    <text evidence="1">Encapsidates the negative strand viral RNA, protecting it from nucleases. The encapsidated genomic RNA is termed the ribonucleoprotein (RNP) and serves as template for transcription and replication. The RNP needs to be localized in the host nucleus to start an infectious cycle, but is too large to diffuse through the nuclear pore complex. NP comprises at least 2 nuclear localization signals that are responsible for the active RNP import into the nucleus through cellular importin alpha/beta pathway. Later in the infection, nclear export of RNPs are mediated through viral proteins NEP interacting with M1 which binds nucleoproteins. It is possible that nucleoprotein binds directly host exportin-1/XPO1 and plays an active role in RNPs nuclear export. M1 interaction with RNP seems to hide nucleoprotein's nuclear localization signals. Soon after a virion infects a new cell, M1 dissociates from the RNP under acidification of the virion driven by M2 protein. Dissociation of M1 from RNP unmasks nucleoprotein's nuclear localization signals, targeting the RNP to the nucleus.</text>
</comment>
<comment type="subunit">
    <text evidence="1">Homomultimerizes to form the nucleocapsid. May bind host exportin-1/XPO1. Binds to viral genomic RNA. Protein-RNA contacts are mediated by a combination of electrostatic interactions between positively charged residues and the phosphate backbone and planar interactions between aromatic side chains and bases.</text>
</comment>
<comment type="subcellular location">
    <subcellularLocation>
        <location evidence="1">Virion</location>
    </subcellularLocation>
    <subcellularLocation>
        <location evidence="1">Host nucleus</location>
    </subcellularLocation>
</comment>
<comment type="PTM">
    <text evidence="1">Late in virus-infected cells, may be cleaved from a 56-kDa protein to a 53-kDa protein by a cellular caspase. This cleavage might be a marker for the onset of apoptosis in infected cells or have a specific function in virus host interaction.</text>
</comment>
<comment type="similarity">
    <text evidence="1">Belongs to the influenza viruses nucleoprotein family.</text>
</comment>
<keyword id="KW-0167">Capsid protein</keyword>
<keyword id="KW-1139">Helical capsid protein</keyword>
<keyword id="KW-1048">Host nucleus</keyword>
<keyword id="KW-0945">Host-virus interaction</keyword>
<keyword id="KW-0687">Ribonucleoprotein</keyword>
<keyword id="KW-0694">RNA-binding</keyword>
<keyword id="KW-0543">Viral nucleoprotein</keyword>
<keyword id="KW-1163">Viral penetration into host nucleus</keyword>
<keyword id="KW-0946">Virion</keyword>
<keyword id="KW-1160">Virus entry into host cell</keyword>
<gene>
    <name evidence="1" type="primary">NP</name>
</gene>
<protein>
    <recommendedName>
        <fullName evidence="1">Nucleoprotein</fullName>
    </recommendedName>
    <alternativeName>
        <fullName evidence="1">Nucleocapsid protein</fullName>
        <shortName evidence="1">Protein N</shortName>
    </alternativeName>
</protein>
<proteinExistence type="inferred from homology"/>
<accession>P26060</accession>
<sequence>MASQGTKRSYEQMETGGERQNATEIRASVGRMVGGIGRFYIQMCTELKLSDYEGRLIQNSITIERMVLSAFDERRNKYLEEHPSAGKDPKKTGGPIYRRRDGKWMRELILYDKEEIRRIWRQANNGEDATAGLTHLMIWHSNLNDATYQRTRALVRTGMDPRMCSLMQGSTLPRRSGAAGAAVKGVGTMVMELIRMIKRGINDRNFWRGENGRRTRIAYERMCNILKGKFQTAAQRAMMDQVRESRNPGNAEVEDLIFLARSALILRGSVAHKSCLPACVYGLAVASGYDFEREGYSLVGIDSFRMLQNSQVFSLIRPNENPAHKSQLVWMACHSAAFEDLRVSSFIRGTRVVPRGQLSTRGVQIASNENMETMDSSTLELRSRYWAIRTRSGGNTNQQRASAGQISVQPTFSVQRNLPFERATIMAAFTGNTEGRTSDMRTEIIKMMENARPEDVSFQGRGVFELSDEKATNPIVPSFDMSNEGSYFFGDNAEEYDN</sequence>
<organismHost>
    <name type="scientific">Aves</name>
    <dbReference type="NCBI Taxonomy" id="8782"/>
</organismHost>
<organismHost>
    <name type="scientific">Homo sapiens</name>
    <name type="common">Human</name>
    <dbReference type="NCBI Taxonomy" id="9606"/>
</organismHost>
<organismHost>
    <name type="scientific">Sus scrofa</name>
    <name type="common">Pig</name>
    <dbReference type="NCBI Taxonomy" id="9823"/>
</organismHost>
<dbReference type="EMBL" id="M63778">
    <property type="protein sequence ID" value="AAA52239.1"/>
    <property type="molecule type" value="Genomic_RNA"/>
</dbReference>
<dbReference type="SMR" id="P26060"/>
<dbReference type="GO" id="GO:0019029">
    <property type="term" value="C:helical viral capsid"/>
    <property type="evidence" value="ECO:0007669"/>
    <property type="project" value="UniProtKB-UniRule"/>
</dbReference>
<dbReference type="GO" id="GO:0043657">
    <property type="term" value="C:host cell"/>
    <property type="evidence" value="ECO:0007669"/>
    <property type="project" value="GOC"/>
</dbReference>
<dbReference type="GO" id="GO:0042025">
    <property type="term" value="C:host cell nucleus"/>
    <property type="evidence" value="ECO:0007669"/>
    <property type="project" value="UniProtKB-SubCell"/>
</dbReference>
<dbReference type="GO" id="GO:1990904">
    <property type="term" value="C:ribonucleoprotein complex"/>
    <property type="evidence" value="ECO:0007669"/>
    <property type="project" value="UniProtKB-KW"/>
</dbReference>
<dbReference type="GO" id="GO:0019013">
    <property type="term" value="C:viral nucleocapsid"/>
    <property type="evidence" value="ECO:0007669"/>
    <property type="project" value="UniProtKB-UniRule"/>
</dbReference>
<dbReference type="GO" id="GO:0003723">
    <property type="term" value="F:RNA binding"/>
    <property type="evidence" value="ECO:0007669"/>
    <property type="project" value="UniProtKB-UniRule"/>
</dbReference>
<dbReference type="GO" id="GO:0005198">
    <property type="term" value="F:structural molecule activity"/>
    <property type="evidence" value="ECO:0007669"/>
    <property type="project" value="UniProtKB-UniRule"/>
</dbReference>
<dbReference type="GO" id="GO:0046718">
    <property type="term" value="P:symbiont entry into host cell"/>
    <property type="evidence" value="ECO:0007669"/>
    <property type="project" value="UniProtKB-KW"/>
</dbReference>
<dbReference type="GO" id="GO:0075732">
    <property type="term" value="P:viral penetration into host nucleus"/>
    <property type="evidence" value="ECO:0007669"/>
    <property type="project" value="UniProtKB-UniRule"/>
</dbReference>
<dbReference type="HAMAP" id="MF_04070">
    <property type="entry name" value="INFV_NCAP"/>
    <property type="match status" value="1"/>
</dbReference>
<dbReference type="InterPro" id="IPR002141">
    <property type="entry name" value="Flu_NP"/>
</dbReference>
<dbReference type="Pfam" id="PF00506">
    <property type="entry name" value="Flu_NP"/>
    <property type="match status" value="1"/>
</dbReference>
<dbReference type="SUPFAM" id="SSF161003">
    <property type="entry name" value="flu NP-like"/>
    <property type="match status" value="1"/>
</dbReference>
<reference key="1">
    <citation type="journal article" date="1991" name="J. Virol.">
        <title>Evolution of influenza A virus nucleoprotein genes: implications for the origins of H1N1 human and classical swine viruses.</title>
        <authorList>
            <person name="Gorman O.T."/>
            <person name="Bean W.J."/>
            <person name="Kawaoka Y."/>
            <person name="Donatelli I."/>
            <person name="Guo Y."/>
            <person name="Webster R.G."/>
        </authorList>
    </citation>
    <scope>NUCLEOTIDE SEQUENCE [GENOMIC RNA]</scope>
</reference>
<name>NCAP_I81A3</name>
<evidence type="ECO:0000255" key="1">
    <source>
        <dbReference type="HAMAP-Rule" id="MF_04070"/>
    </source>
</evidence>
<evidence type="ECO:0000256" key="2">
    <source>
        <dbReference type="SAM" id="MobiDB-lite"/>
    </source>
</evidence>
<organism>
    <name type="scientific">Influenza A virus (strain A/Turkey/Minnesota/1661/1981 H1N1)</name>
    <dbReference type="NCBI Taxonomy" id="380349"/>
    <lineage>
        <taxon>Viruses</taxon>
        <taxon>Riboviria</taxon>
        <taxon>Orthornavirae</taxon>
        <taxon>Negarnaviricota</taxon>
        <taxon>Polyploviricotina</taxon>
        <taxon>Insthoviricetes</taxon>
        <taxon>Articulavirales</taxon>
        <taxon>Orthomyxoviridae</taxon>
        <taxon>Alphainfluenzavirus</taxon>
        <taxon>Alphainfluenzavirus influenzae</taxon>
        <taxon>Influenza A virus</taxon>
    </lineage>
</organism>